<keyword id="KW-1003">Cell membrane</keyword>
<keyword id="KW-0472">Membrane</keyword>
<keyword id="KW-0812">Transmembrane</keyword>
<keyword id="KW-1133">Transmembrane helix</keyword>
<reference key="1">
    <citation type="submission" date="2008-10" db="EMBL/GenBank/DDBJ databases">
        <title>Genome sequence of Bacillus cereus AH187.</title>
        <authorList>
            <person name="Dodson R.J."/>
            <person name="Durkin A.S."/>
            <person name="Rosovitz M.J."/>
            <person name="Rasko D.A."/>
            <person name="Kolsto A.B."/>
            <person name="Okstad O.A."/>
            <person name="Ravel J."/>
            <person name="Sutton G."/>
        </authorList>
    </citation>
    <scope>NUCLEOTIDE SEQUENCE [LARGE SCALE GENOMIC DNA]</scope>
    <source>
        <strain>AH187</strain>
    </source>
</reference>
<gene>
    <name type="ordered locus">BCAH187_A4721</name>
</gene>
<dbReference type="EMBL" id="CP001177">
    <property type="protein sequence ID" value="ACJ79496.1"/>
    <property type="molecule type" value="Genomic_DNA"/>
</dbReference>
<dbReference type="KEGG" id="bcr:BCAH187_A4721"/>
<dbReference type="HOGENOM" id="CLU_125889_1_0_9"/>
<dbReference type="Proteomes" id="UP000002214">
    <property type="component" value="Chromosome"/>
</dbReference>
<dbReference type="GO" id="GO:0005886">
    <property type="term" value="C:plasma membrane"/>
    <property type="evidence" value="ECO:0007669"/>
    <property type="project" value="UniProtKB-SubCell"/>
</dbReference>
<dbReference type="HAMAP" id="MF_01874">
    <property type="entry name" value="UPF0756"/>
    <property type="match status" value="1"/>
</dbReference>
<dbReference type="InterPro" id="IPR007382">
    <property type="entry name" value="UPF0756_TM"/>
</dbReference>
<dbReference type="PANTHER" id="PTHR38452">
    <property type="entry name" value="UPF0756 MEMBRANE PROTEIN YEAL"/>
    <property type="match status" value="1"/>
</dbReference>
<dbReference type="PANTHER" id="PTHR38452:SF1">
    <property type="entry name" value="UPF0756 MEMBRANE PROTEIN YEAL"/>
    <property type="match status" value="1"/>
</dbReference>
<dbReference type="Pfam" id="PF04284">
    <property type="entry name" value="DUF441"/>
    <property type="match status" value="1"/>
</dbReference>
<name>Y4721_BACC7</name>
<sequence length="153" mass="15998">MISQSTLFLFILLIIGLIAKNQSLTVAIGVLFLLKFTFLGDKVFPYLQTKGINLGVTVITIAVLVPIATGEIGFKQLGEAAKSYYAWIALASGVAVALLAKGGVQLLTTDPHITTALVFGTIIAVALFNGVAVGPLIGAGIAYAVMSIIQMFK</sequence>
<evidence type="ECO:0000255" key="1">
    <source>
        <dbReference type="HAMAP-Rule" id="MF_01874"/>
    </source>
</evidence>
<organism>
    <name type="scientific">Bacillus cereus (strain AH187)</name>
    <dbReference type="NCBI Taxonomy" id="405534"/>
    <lineage>
        <taxon>Bacteria</taxon>
        <taxon>Bacillati</taxon>
        <taxon>Bacillota</taxon>
        <taxon>Bacilli</taxon>
        <taxon>Bacillales</taxon>
        <taxon>Bacillaceae</taxon>
        <taxon>Bacillus</taxon>
        <taxon>Bacillus cereus group</taxon>
    </lineage>
</organism>
<accession>B7HRN5</accession>
<protein>
    <recommendedName>
        <fullName evidence="1">UPF0756 membrane protein BCAH187_A4721</fullName>
    </recommendedName>
</protein>
<proteinExistence type="inferred from homology"/>
<comment type="subcellular location">
    <subcellularLocation>
        <location evidence="1">Cell membrane</location>
        <topology evidence="1">Multi-pass membrane protein</topology>
    </subcellularLocation>
</comment>
<comment type="similarity">
    <text evidence="1">Belongs to the UPF0756 family.</text>
</comment>
<feature type="chain" id="PRO_0000388822" description="UPF0756 membrane protein BCAH187_A4721">
    <location>
        <begin position="1"/>
        <end position="153"/>
    </location>
</feature>
<feature type="transmembrane region" description="Helical" evidence="1">
    <location>
        <begin position="8"/>
        <end position="28"/>
    </location>
</feature>
<feature type="transmembrane region" description="Helical" evidence="1">
    <location>
        <begin position="54"/>
        <end position="74"/>
    </location>
</feature>
<feature type="transmembrane region" description="Helical" evidence="1">
    <location>
        <begin position="87"/>
        <end position="107"/>
    </location>
</feature>
<feature type="transmembrane region" description="Helical" evidence="1">
    <location>
        <begin position="117"/>
        <end position="137"/>
    </location>
</feature>